<keyword id="KW-0963">Cytoplasm</keyword>
<keyword id="KW-0903">Direct protein sequencing</keyword>
<keyword id="KW-0539">Nucleus</keyword>
<keyword id="KW-0597">Phosphoprotein</keyword>
<keyword id="KW-0646">Protease inhibitor</keyword>
<keyword id="KW-0653">Protein transport</keyword>
<keyword id="KW-0722">Serine protease inhibitor</keyword>
<keyword id="KW-0813">Transport</keyword>
<organism>
    <name type="scientific">Saccharomyces cerevisiae</name>
    <name type="common">Baker's yeast</name>
    <dbReference type="NCBI Taxonomy" id="4932"/>
    <lineage>
        <taxon>Eukaryota</taxon>
        <taxon>Fungi</taxon>
        <taxon>Dikarya</taxon>
        <taxon>Ascomycota</taxon>
        <taxon>Saccharomycotina</taxon>
        <taxon>Saccharomycetes</taxon>
        <taxon>Saccharomycetales</taxon>
        <taxon>Saccharomycetaceae</taxon>
        <taxon>Saccharomyces</taxon>
    </lineage>
</organism>
<accession>P0CT05</accession>
<accession>D6W1G3</accession>
<accession>P01095</accession>
<gene>
    <name type="primary">PBI2</name>
    <name type="ordered locus">YNL015W</name>
</gene>
<comment type="function">
    <text evidence="1 4">Cytosolic inhibitor of vacuolar proteinase B (yscB), probably regulating protease B activity during limited proteolysis. PBI2 is a component of the LMA1 complex, which is involved in the facilitation of vesicle fusion such as homotypic vacuole and ER-derived COPII vesicle fusion with the Golgi (By similarity).</text>
</comment>
<comment type="subunit">
    <text evidence="1">Part of the heterodimeric LMA1 complex together with the thioredoxin II/TRX2. LMA1 binds to the ATPase SEC18 (By similarity).</text>
</comment>
<comment type="subcellular location">
    <subcellularLocation>
        <location evidence="3">Cytoplasm</location>
    </subcellularLocation>
    <subcellularLocation>
        <location evidence="1">Nucleus</location>
    </subcellularLocation>
</comment>
<comment type="miscellaneous">
    <text evidence="7">Originally, 2 inhibitors of protease B, inhibitor I(B)2 and inhibitor I(B)1, have been isolated from commercial baker's yeast, which consists of both S.cerevisiae and S.carlsbergensis. It has been shown that S.cerevisiae only produces inhibitor 2, and S.carlsbergensis only produces inhibitor 1 (PubMed:328499). A sequence for inhibitor 2 can be found in strain S288c (AC P0CT04).</text>
</comment>
<comment type="similarity">
    <text evidence="6">Belongs to the protease inhibitor I9 family.</text>
</comment>
<proteinExistence type="evidence at protein level"/>
<feature type="initiator methionine" description="Removed" evidence="5">
    <location>
        <position position="1"/>
    </location>
</feature>
<feature type="chain" id="PRO_0000422802" description="Protease B inhibitor 1">
    <location>
        <begin position="2"/>
        <end position="75"/>
    </location>
</feature>
<feature type="modified residue" description="Phosphothreonine" evidence="2">
    <location>
        <position position="74"/>
    </location>
</feature>
<evidence type="ECO:0000250" key="1"/>
<evidence type="ECO:0000250" key="2">
    <source>
        <dbReference type="UniProtKB" id="P0CT04"/>
    </source>
</evidence>
<evidence type="ECO:0000269" key="3">
    <source>
    </source>
</evidence>
<evidence type="ECO:0000269" key="4">
    <source>
    </source>
</evidence>
<evidence type="ECO:0000269" key="5">
    <source>
    </source>
</evidence>
<evidence type="ECO:0000305" key="6"/>
<evidence type="ECO:0000305" key="7">
    <source>
    </source>
</evidence>
<protein>
    <recommendedName>
        <fullName>Protease B inhibitor 1</fullName>
    </recommendedName>
    <alternativeName>
        <fullName>Proteinase inhibitor I(B)1</fullName>
    </alternativeName>
</protein>
<name>IPB1_YEASX</name>
<reference key="1">
    <citation type="journal article" date="1979" name="Biochem. Biophys. Res. Commun.">
        <title>Amino acid sequence of yeast proteinase B inhibitor 1 and comparison with inhibitor 2.</title>
        <authorList>
            <person name="Maier K."/>
            <person name="Mueller H."/>
            <person name="Tesch R."/>
            <person name="Witt I."/>
            <person name="Holzer H."/>
        </authorList>
    </citation>
    <scope>PROTEIN SEQUENCE OF 2-75</scope>
    <scope>CLEAVAGE OF INITIATOR METHIONINE</scope>
    <source>
        <strain>Carlsbergensis</strain>
    </source>
</reference>
<reference key="2">
    <citation type="journal article" date="1975" name="Biochim. Biophys. Acta">
        <title>Levels and turnover of the proteinase B inhibitors in yeast.</title>
        <authorList>
            <person name="Betz H."/>
        </authorList>
    </citation>
    <scope>ORIGIN OF SEQUENCE</scope>
    <scope>SUBCELLULAR LOCATION</scope>
    <source>
        <strain>4228 / ATCC 9080 / CBS 2354 / DSM 70424 / NBRC 0565 / NCYC 74 / NRRL Y-1089</strain>
    </source>
</reference>
<reference key="3">
    <citation type="journal article" date="1977" name="J. Biol. Chem.">
        <title>Natural occurrence and chemical modification of proteinase B inhibitors from yeast.</title>
        <authorList>
            <person name="Buenning P."/>
            <person name="Holzer H."/>
        </authorList>
    </citation>
    <scope>ORIGIN OF SEQUENCE</scope>
    <source>
        <strain>4228 / ATCC 9080 / CBS 2354 / DSM 70424 / NBRC 0565 / NCYC 74 / NRRL Y-1089</strain>
    </source>
</reference>
<reference key="4">
    <citation type="journal article" date="1991" name="Eur. J. Biochem.">
        <title>The proteinase yscB inhibitor (PBI2) gene of yeast and studies on the function of its protein product.</title>
        <authorList>
            <person name="Schu P."/>
            <person name="Wolf D.H."/>
        </authorList>
    </citation>
    <scope>FUNCTION</scope>
    <source>
        <strain>Carlsbergensis</strain>
    </source>
</reference>
<sequence length="75" mass="8589">MTKNFIVTLKKNTPDVEAKKFLDSVHHAGGSIVHKFDIIKGYTIKVPDVLHLNKLKEKHNDVIENVEEDKEVHTN</sequence>
<dbReference type="PIR" id="S16882">
    <property type="entry name" value="YBBY2"/>
</dbReference>
<dbReference type="SMR" id="P0CT05"/>
<dbReference type="IntAct" id="P0CT05">
    <property type="interactions" value="1"/>
</dbReference>
<dbReference type="MINT" id="P0CT05"/>
<dbReference type="VEuPathDB" id="FungiDB:YNL015W"/>
<dbReference type="OrthoDB" id="5518345at2759"/>
<dbReference type="GO" id="GO:0005737">
    <property type="term" value="C:cytoplasm"/>
    <property type="evidence" value="ECO:0007669"/>
    <property type="project" value="UniProtKB-SubCell"/>
</dbReference>
<dbReference type="GO" id="GO:0005634">
    <property type="term" value="C:nucleus"/>
    <property type="evidence" value="ECO:0007669"/>
    <property type="project" value="UniProtKB-SubCell"/>
</dbReference>
<dbReference type="GO" id="GO:0004867">
    <property type="term" value="F:serine-type endopeptidase inhibitor activity"/>
    <property type="evidence" value="ECO:0007669"/>
    <property type="project" value="UniProtKB-KW"/>
</dbReference>
<dbReference type="GO" id="GO:0015031">
    <property type="term" value="P:protein transport"/>
    <property type="evidence" value="ECO:0007669"/>
    <property type="project" value="UniProtKB-KW"/>
</dbReference>
<dbReference type="GO" id="GO:0042144">
    <property type="term" value="P:vacuole fusion, non-autophagic"/>
    <property type="evidence" value="ECO:0007669"/>
    <property type="project" value="TreeGrafter"/>
</dbReference>
<dbReference type="FunFam" id="3.30.70.80:FF:000005">
    <property type="entry name" value="Proteinase inhibitor I2B"/>
    <property type="match status" value="1"/>
</dbReference>
<dbReference type="Gene3D" id="3.30.70.80">
    <property type="entry name" value="Peptidase S8 propeptide/proteinase inhibitor I9"/>
    <property type="match status" value="1"/>
</dbReference>
<dbReference type="InterPro" id="IPR052471">
    <property type="entry name" value="PBI_I9"/>
</dbReference>
<dbReference type="InterPro" id="IPR037045">
    <property type="entry name" value="S8pro/Inhibitor_I9_sf"/>
</dbReference>
<dbReference type="PANTHER" id="PTHR28288">
    <property type="entry name" value="PROTEASE B INHIBITOR 2"/>
    <property type="match status" value="1"/>
</dbReference>
<dbReference type="PANTHER" id="PTHR28288:SF2">
    <property type="entry name" value="PROTEASE B INHIBITOR 2"/>
    <property type="match status" value="1"/>
</dbReference>
<dbReference type="SUPFAM" id="SSF54897">
    <property type="entry name" value="Protease propeptides/inhibitors"/>
    <property type="match status" value="1"/>
</dbReference>